<feature type="chain" id="PRO_0000239914" description="Urease subunit gamma">
    <location>
        <begin position="1"/>
        <end position="100"/>
    </location>
</feature>
<accession>Q21P96</accession>
<proteinExistence type="inferred from homology"/>
<keyword id="KW-0963">Cytoplasm</keyword>
<keyword id="KW-0378">Hydrolase</keyword>
<keyword id="KW-1185">Reference proteome</keyword>
<comment type="catalytic activity">
    <reaction evidence="1">
        <text>urea + 2 H2O + H(+) = hydrogencarbonate + 2 NH4(+)</text>
        <dbReference type="Rhea" id="RHEA:20557"/>
        <dbReference type="ChEBI" id="CHEBI:15377"/>
        <dbReference type="ChEBI" id="CHEBI:15378"/>
        <dbReference type="ChEBI" id="CHEBI:16199"/>
        <dbReference type="ChEBI" id="CHEBI:17544"/>
        <dbReference type="ChEBI" id="CHEBI:28938"/>
        <dbReference type="EC" id="3.5.1.5"/>
    </reaction>
</comment>
<comment type="pathway">
    <text evidence="1">Nitrogen metabolism; urea degradation; CO(2) and NH(3) from urea (urease route): step 1/1.</text>
</comment>
<comment type="subunit">
    <text evidence="1">Heterotrimer of UreA (gamma), UreB (beta) and UreC (alpha) subunits. Three heterotrimers associate to form the active enzyme.</text>
</comment>
<comment type="subcellular location">
    <subcellularLocation>
        <location evidence="1">Cytoplasm</location>
    </subcellularLocation>
</comment>
<comment type="similarity">
    <text evidence="1">Belongs to the urease gamma subunit family.</text>
</comment>
<gene>
    <name evidence="1" type="primary">ureA</name>
    <name type="ordered locus">Sde_0219</name>
</gene>
<dbReference type="EC" id="3.5.1.5" evidence="1"/>
<dbReference type="EMBL" id="CP000282">
    <property type="protein sequence ID" value="ABD79483.1"/>
    <property type="molecule type" value="Genomic_DNA"/>
</dbReference>
<dbReference type="RefSeq" id="WP_011466707.1">
    <property type="nucleotide sequence ID" value="NC_007912.1"/>
</dbReference>
<dbReference type="SMR" id="Q21P96"/>
<dbReference type="STRING" id="203122.Sde_0219"/>
<dbReference type="GeneID" id="98611925"/>
<dbReference type="KEGG" id="sde:Sde_0219"/>
<dbReference type="eggNOG" id="COG0831">
    <property type="taxonomic scope" value="Bacteria"/>
</dbReference>
<dbReference type="HOGENOM" id="CLU_145825_1_0_6"/>
<dbReference type="OrthoDB" id="9797217at2"/>
<dbReference type="UniPathway" id="UPA00258">
    <property type="reaction ID" value="UER00370"/>
</dbReference>
<dbReference type="Proteomes" id="UP000001947">
    <property type="component" value="Chromosome"/>
</dbReference>
<dbReference type="GO" id="GO:0005737">
    <property type="term" value="C:cytoplasm"/>
    <property type="evidence" value="ECO:0007669"/>
    <property type="project" value="UniProtKB-SubCell"/>
</dbReference>
<dbReference type="GO" id="GO:0016151">
    <property type="term" value="F:nickel cation binding"/>
    <property type="evidence" value="ECO:0007669"/>
    <property type="project" value="InterPro"/>
</dbReference>
<dbReference type="GO" id="GO:0009039">
    <property type="term" value="F:urease activity"/>
    <property type="evidence" value="ECO:0007669"/>
    <property type="project" value="UniProtKB-UniRule"/>
</dbReference>
<dbReference type="GO" id="GO:0043419">
    <property type="term" value="P:urea catabolic process"/>
    <property type="evidence" value="ECO:0007669"/>
    <property type="project" value="UniProtKB-UniRule"/>
</dbReference>
<dbReference type="CDD" id="cd00390">
    <property type="entry name" value="Urease_gamma"/>
    <property type="match status" value="1"/>
</dbReference>
<dbReference type="Gene3D" id="3.30.280.10">
    <property type="entry name" value="Urease, gamma-like subunit"/>
    <property type="match status" value="1"/>
</dbReference>
<dbReference type="HAMAP" id="MF_00739">
    <property type="entry name" value="Urease_gamma"/>
    <property type="match status" value="1"/>
</dbReference>
<dbReference type="InterPro" id="IPR012010">
    <property type="entry name" value="Urease_gamma"/>
</dbReference>
<dbReference type="InterPro" id="IPR002026">
    <property type="entry name" value="Urease_gamma/gamma-beta_su"/>
</dbReference>
<dbReference type="InterPro" id="IPR036463">
    <property type="entry name" value="Urease_gamma_sf"/>
</dbReference>
<dbReference type="InterPro" id="IPR050069">
    <property type="entry name" value="Urease_subunit"/>
</dbReference>
<dbReference type="NCBIfam" id="NF009712">
    <property type="entry name" value="PRK13241.1"/>
    <property type="match status" value="1"/>
</dbReference>
<dbReference type="NCBIfam" id="TIGR00193">
    <property type="entry name" value="urease_gam"/>
    <property type="match status" value="1"/>
</dbReference>
<dbReference type="PANTHER" id="PTHR33569">
    <property type="entry name" value="UREASE"/>
    <property type="match status" value="1"/>
</dbReference>
<dbReference type="PANTHER" id="PTHR33569:SF1">
    <property type="entry name" value="UREASE"/>
    <property type="match status" value="1"/>
</dbReference>
<dbReference type="Pfam" id="PF00547">
    <property type="entry name" value="Urease_gamma"/>
    <property type="match status" value="1"/>
</dbReference>
<dbReference type="PIRSF" id="PIRSF001223">
    <property type="entry name" value="Urease_gamma"/>
    <property type="match status" value="1"/>
</dbReference>
<dbReference type="SUPFAM" id="SSF54111">
    <property type="entry name" value="Urease, gamma-subunit"/>
    <property type="match status" value="1"/>
</dbReference>
<organism>
    <name type="scientific">Saccharophagus degradans (strain 2-40 / ATCC 43961 / DSM 17024)</name>
    <dbReference type="NCBI Taxonomy" id="203122"/>
    <lineage>
        <taxon>Bacteria</taxon>
        <taxon>Pseudomonadati</taxon>
        <taxon>Pseudomonadota</taxon>
        <taxon>Gammaproteobacteria</taxon>
        <taxon>Cellvibrionales</taxon>
        <taxon>Cellvibrionaceae</taxon>
        <taxon>Saccharophagus</taxon>
    </lineage>
</organism>
<name>URE3_SACD2</name>
<protein>
    <recommendedName>
        <fullName evidence="1">Urease subunit gamma</fullName>
        <ecNumber evidence="1">3.5.1.5</ecNumber>
    </recommendedName>
    <alternativeName>
        <fullName evidence="1">Urea amidohydrolase subunit gamma</fullName>
    </alternativeName>
</protein>
<evidence type="ECO:0000255" key="1">
    <source>
        <dbReference type="HAMAP-Rule" id="MF_00739"/>
    </source>
</evidence>
<reference key="1">
    <citation type="journal article" date="2008" name="PLoS Genet.">
        <title>Complete genome sequence of the complex carbohydrate-degrading marine bacterium, Saccharophagus degradans strain 2-40 T.</title>
        <authorList>
            <person name="Weiner R.M."/>
            <person name="Taylor L.E. II"/>
            <person name="Henrissat B."/>
            <person name="Hauser L."/>
            <person name="Land M."/>
            <person name="Coutinho P.M."/>
            <person name="Rancurel C."/>
            <person name="Saunders E.H."/>
            <person name="Longmire A.G."/>
            <person name="Zhang H."/>
            <person name="Bayer E.A."/>
            <person name="Gilbert H.J."/>
            <person name="Larimer F."/>
            <person name="Zhulin I.B."/>
            <person name="Ekborg N.A."/>
            <person name="Lamed R."/>
            <person name="Richardson P.M."/>
            <person name="Borovok I."/>
            <person name="Hutcheson S."/>
        </authorList>
    </citation>
    <scope>NUCLEOTIDE SEQUENCE [LARGE SCALE GENOMIC DNA]</scope>
    <source>
        <strain>2-40 / ATCC 43961 / DSM 17024</strain>
    </source>
</reference>
<sequence>MELNPREKDKLLLFTAALLAERRKARGVKLNYPEAIALISAEVMEGARDGKTVAELMEAGRQVLRVEDVMDGIADMIHEVQVEATFPDGTKLVTVHNPIV</sequence>